<keyword id="KW-0408">Iron</keyword>
<keyword id="KW-0479">Metal-binding</keyword>
<protein>
    <recommendedName>
        <fullName evidence="1">Iron-binding protein IscA</fullName>
    </recommendedName>
    <alternativeName>
        <fullName evidence="1">Iron-sulfur cluster assembly protein</fullName>
    </alternativeName>
</protein>
<sequence>MSITLSDSAAARVNTFLANRGKGFGLRLGVRTSGCSGMAYVLEFVDEPTAEDTVFEDKGVKVVVDGKSLQFLDGTQLDFVKEGLNEGFKFSNPNVKDECGCGESFHV</sequence>
<feature type="chain" id="PRO_1000145765" description="Iron-binding protein IscA">
    <location>
        <begin position="1"/>
        <end position="107"/>
    </location>
</feature>
<feature type="binding site" evidence="1">
    <location>
        <position position="35"/>
    </location>
    <ligand>
        <name>Fe cation</name>
        <dbReference type="ChEBI" id="CHEBI:24875"/>
    </ligand>
</feature>
<feature type="binding site" evidence="1">
    <location>
        <position position="99"/>
    </location>
    <ligand>
        <name>Fe cation</name>
        <dbReference type="ChEBI" id="CHEBI:24875"/>
    </ligand>
</feature>
<feature type="binding site" evidence="1">
    <location>
        <position position="101"/>
    </location>
    <ligand>
        <name>Fe cation</name>
        <dbReference type="ChEBI" id="CHEBI:24875"/>
    </ligand>
</feature>
<reference key="1">
    <citation type="journal article" date="2009" name="BMC Genomics">
        <title>Pseudogene accumulation in the evolutionary histories of Salmonella enterica serovars Paratyphi A and Typhi.</title>
        <authorList>
            <person name="Holt K.E."/>
            <person name="Thomson N.R."/>
            <person name="Wain J."/>
            <person name="Langridge G.C."/>
            <person name="Hasan R."/>
            <person name="Bhutta Z.A."/>
            <person name="Quail M.A."/>
            <person name="Norbertczak H."/>
            <person name="Walker D."/>
            <person name="Simmonds M."/>
            <person name="White B."/>
            <person name="Bason N."/>
            <person name="Mungall K."/>
            <person name="Dougan G."/>
            <person name="Parkhill J."/>
        </authorList>
    </citation>
    <scope>NUCLEOTIDE SEQUENCE [LARGE SCALE GENOMIC DNA]</scope>
    <source>
        <strain>AKU_12601</strain>
    </source>
</reference>
<dbReference type="EMBL" id="FM200053">
    <property type="protein sequence ID" value="CAR58424.1"/>
    <property type="molecule type" value="Genomic_DNA"/>
</dbReference>
<dbReference type="RefSeq" id="WP_000028952.1">
    <property type="nucleotide sequence ID" value="NC_011147.1"/>
</dbReference>
<dbReference type="SMR" id="B5BAW8"/>
<dbReference type="GeneID" id="66756972"/>
<dbReference type="KEGG" id="sek:SSPA0307"/>
<dbReference type="HOGENOM" id="CLU_069054_5_1_6"/>
<dbReference type="Proteomes" id="UP000001869">
    <property type="component" value="Chromosome"/>
</dbReference>
<dbReference type="GO" id="GO:0005829">
    <property type="term" value="C:cytosol"/>
    <property type="evidence" value="ECO:0007669"/>
    <property type="project" value="TreeGrafter"/>
</dbReference>
<dbReference type="GO" id="GO:0051537">
    <property type="term" value="F:2 iron, 2 sulfur cluster binding"/>
    <property type="evidence" value="ECO:0007669"/>
    <property type="project" value="TreeGrafter"/>
</dbReference>
<dbReference type="GO" id="GO:0005506">
    <property type="term" value="F:iron ion binding"/>
    <property type="evidence" value="ECO:0007669"/>
    <property type="project" value="UniProtKB-UniRule"/>
</dbReference>
<dbReference type="GO" id="GO:0016226">
    <property type="term" value="P:iron-sulfur cluster assembly"/>
    <property type="evidence" value="ECO:0007669"/>
    <property type="project" value="UniProtKB-UniRule"/>
</dbReference>
<dbReference type="FunFam" id="2.60.300.12:FF:000001">
    <property type="entry name" value="Iron-binding protein IscA"/>
    <property type="match status" value="1"/>
</dbReference>
<dbReference type="Gene3D" id="2.60.300.12">
    <property type="entry name" value="HesB-like domain"/>
    <property type="match status" value="1"/>
</dbReference>
<dbReference type="HAMAP" id="MF_01429">
    <property type="entry name" value="Fe_S_insert_IscA"/>
    <property type="match status" value="1"/>
</dbReference>
<dbReference type="InterPro" id="IPR050322">
    <property type="entry name" value="Fe-S_cluster_asmbl/transfer"/>
</dbReference>
<dbReference type="InterPro" id="IPR000361">
    <property type="entry name" value="FeS_biogenesis"/>
</dbReference>
<dbReference type="InterPro" id="IPR016092">
    <property type="entry name" value="FeS_cluster_insertion"/>
</dbReference>
<dbReference type="InterPro" id="IPR017870">
    <property type="entry name" value="FeS_cluster_insertion_CS"/>
</dbReference>
<dbReference type="InterPro" id="IPR035903">
    <property type="entry name" value="HesB-like_dom_sf"/>
</dbReference>
<dbReference type="InterPro" id="IPR011302">
    <property type="entry name" value="IscA_proteobacteria"/>
</dbReference>
<dbReference type="NCBIfam" id="TIGR00049">
    <property type="entry name" value="iron-sulfur cluster assembly accessory protein"/>
    <property type="match status" value="1"/>
</dbReference>
<dbReference type="NCBIfam" id="TIGR02011">
    <property type="entry name" value="IscA"/>
    <property type="match status" value="1"/>
</dbReference>
<dbReference type="NCBIfam" id="NF007049">
    <property type="entry name" value="PRK09502.1"/>
    <property type="match status" value="1"/>
</dbReference>
<dbReference type="PANTHER" id="PTHR10072:SF41">
    <property type="entry name" value="IRON-SULFUR CLUSTER ASSEMBLY 1 HOMOLOG, MITOCHONDRIAL"/>
    <property type="match status" value="1"/>
</dbReference>
<dbReference type="PANTHER" id="PTHR10072">
    <property type="entry name" value="IRON-SULFUR CLUSTER ASSEMBLY PROTEIN"/>
    <property type="match status" value="1"/>
</dbReference>
<dbReference type="Pfam" id="PF01521">
    <property type="entry name" value="Fe-S_biosyn"/>
    <property type="match status" value="1"/>
</dbReference>
<dbReference type="SUPFAM" id="SSF89360">
    <property type="entry name" value="HesB-like domain"/>
    <property type="match status" value="1"/>
</dbReference>
<dbReference type="PROSITE" id="PS01152">
    <property type="entry name" value="HESB"/>
    <property type="match status" value="1"/>
</dbReference>
<name>ISCA_SALPK</name>
<accession>B5BAW8</accession>
<gene>
    <name evidence="1" type="primary">iscA</name>
    <name type="ordered locus">SSPA0307</name>
</gene>
<comment type="function">
    <text evidence="1">Is able to transfer iron-sulfur clusters to apo-ferredoxin. Multiple cycles of [2Fe2S] cluster formation and transfer are observed, suggesting that IscA acts catalytically. Recruits intracellular free iron so as to provide iron for the assembly of transient iron-sulfur cluster in IscU in the presence of IscS, L-cysteine and the thioredoxin reductase system TrxA/TrxB.</text>
</comment>
<comment type="cofactor">
    <cofactor evidence="1">
        <name>Fe cation</name>
        <dbReference type="ChEBI" id="CHEBI:24875"/>
    </cofactor>
    <text evidence="1">Binds 2 iron ions per dimer. The dimer may bind additional iron ions.</text>
</comment>
<comment type="subunit">
    <text evidence="1">Homodimer; may form tetramers and higher multimers.</text>
</comment>
<comment type="similarity">
    <text evidence="1">Belongs to the HesB/IscA family.</text>
</comment>
<evidence type="ECO:0000255" key="1">
    <source>
        <dbReference type="HAMAP-Rule" id="MF_01429"/>
    </source>
</evidence>
<proteinExistence type="inferred from homology"/>
<organism>
    <name type="scientific">Salmonella paratyphi A (strain AKU_12601)</name>
    <dbReference type="NCBI Taxonomy" id="554290"/>
    <lineage>
        <taxon>Bacteria</taxon>
        <taxon>Pseudomonadati</taxon>
        <taxon>Pseudomonadota</taxon>
        <taxon>Gammaproteobacteria</taxon>
        <taxon>Enterobacterales</taxon>
        <taxon>Enterobacteriaceae</taxon>
        <taxon>Salmonella</taxon>
    </lineage>
</organism>